<dbReference type="EC" id="2.7.1.148" evidence="1"/>
<dbReference type="EMBL" id="CP000112">
    <property type="protein sequence ID" value="ABB38922.1"/>
    <property type="molecule type" value="Genomic_DNA"/>
</dbReference>
<dbReference type="RefSeq" id="WP_011368025.1">
    <property type="nucleotide sequence ID" value="NC_007519.1"/>
</dbReference>
<dbReference type="SMR" id="Q30ZH4"/>
<dbReference type="STRING" id="207559.Dde_2125"/>
<dbReference type="KEGG" id="dde:Dde_2125"/>
<dbReference type="eggNOG" id="COG1947">
    <property type="taxonomic scope" value="Bacteria"/>
</dbReference>
<dbReference type="HOGENOM" id="CLU_053057_1_1_7"/>
<dbReference type="UniPathway" id="UPA00056">
    <property type="reaction ID" value="UER00094"/>
</dbReference>
<dbReference type="Proteomes" id="UP000002710">
    <property type="component" value="Chromosome"/>
</dbReference>
<dbReference type="GO" id="GO:0050515">
    <property type="term" value="F:4-(cytidine 5'-diphospho)-2-C-methyl-D-erythritol kinase activity"/>
    <property type="evidence" value="ECO:0007669"/>
    <property type="project" value="UniProtKB-UniRule"/>
</dbReference>
<dbReference type="GO" id="GO:0005524">
    <property type="term" value="F:ATP binding"/>
    <property type="evidence" value="ECO:0007669"/>
    <property type="project" value="UniProtKB-UniRule"/>
</dbReference>
<dbReference type="GO" id="GO:0019288">
    <property type="term" value="P:isopentenyl diphosphate biosynthetic process, methylerythritol 4-phosphate pathway"/>
    <property type="evidence" value="ECO:0007669"/>
    <property type="project" value="UniProtKB-UniRule"/>
</dbReference>
<dbReference type="GO" id="GO:0016114">
    <property type="term" value="P:terpenoid biosynthetic process"/>
    <property type="evidence" value="ECO:0007669"/>
    <property type="project" value="InterPro"/>
</dbReference>
<dbReference type="Gene3D" id="3.30.230.10">
    <property type="match status" value="1"/>
</dbReference>
<dbReference type="Gene3D" id="3.30.70.890">
    <property type="entry name" value="GHMP kinase, C-terminal domain"/>
    <property type="match status" value="1"/>
</dbReference>
<dbReference type="HAMAP" id="MF_00061">
    <property type="entry name" value="IspE"/>
    <property type="match status" value="1"/>
</dbReference>
<dbReference type="InterPro" id="IPR013750">
    <property type="entry name" value="GHMP_kinase_C_dom"/>
</dbReference>
<dbReference type="InterPro" id="IPR036554">
    <property type="entry name" value="GHMP_kinase_C_sf"/>
</dbReference>
<dbReference type="InterPro" id="IPR006204">
    <property type="entry name" value="GHMP_kinase_N_dom"/>
</dbReference>
<dbReference type="InterPro" id="IPR004424">
    <property type="entry name" value="IspE"/>
</dbReference>
<dbReference type="InterPro" id="IPR020568">
    <property type="entry name" value="Ribosomal_Su5_D2-typ_SF"/>
</dbReference>
<dbReference type="InterPro" id="IPR014721">
    <property type="entry name" value="Ribsml_uS5_D2-typ_fold_subgr"/>
</dbReference>
<dbReference type="NCBIfam" id="TIGR00154">
    <property type="entry name" value="ispE"/>
    <property type="match status" value="1"/>
</dbReference>
<dbReference type="PANTHER" id="PTHR43527">
    <property type="entry name" value="4-DIPHOSPHOCYTIDYL-2-C-METHYL-D-ERYTHRITOL KINASE, CHLOROPLASTIC"/>
    <property type="match status" value="1"/>
</dbReference>
<dbReference type="PANTHER" id="PTHR43527:SF2">
    <property type="entry name" value="4-DIPHOSPHOCYTIDYL-2-C-METHYL-D-ERYTHRITOL KINASE, CHLOROPLASTIC"/>
    <property type="match status" value="1"/>
</dbReference>
<dbReference type="Pfam" id="PF08544">
    <property type="entry name" value="GHMP_kinases_C"/>
    <property type="match status" value="1"/>
</dbReference>
<dbReference type="Pfam" id="PF00288">
    <property type="entry name" value="GHMP_kinases_N"/>
    <property type="match status" value="1"/>
</dbReference>
<dbReference type="PIRSF" id="PIRSF010376">
    <property type="entry name" value="IspE"/>
    <property type="match status" value="1"/>
</dbReference>
<dbReference type="SUPFAM" id="SSF55060">
    <property type="entry name" value="GHMP Kinase, C-terminal domain"/>
    <property type="match status" value="1"/>
</dbReference>
<dbReference type="SUPFAM" id="SSF54211">
    <property type="entry name" value="Ribosomal protein S5 domain 2-like"/>
    <property type="match status" value="1"/>
</dbReference>
<gene>
    <name evidence="1" type="primary">ispE</name>
    <name type="ordered locus">Dde_2125</name>
</gene>
<organism>
    <name type="scientific">Oleidesulfovibrio alaskensis (strain ATCC BAA-1058 / DSM 17464 / G20)</name>
    <name type="common">Desulfovibrio alaskensis</name>
    <dbReference type="NCBI Taxonomy" id="207559"/>
    <lineage>
        <taxon>Bacteria</taxon>
        <taxon>Pseudomonadati</taxon>
        <taxon>Thermodesulfobacteriota</taxon>
        <taxon>Desulfovibrionia</taxon>
        <taxon>Desulfovibrionales</taxon>
        <taxon>Desulfovibrionaceae</taxon>
        <taxon>Oleidesulfovibrio</taxon>
    </lineage>
</organism>
<name>ISPE_OLEA2</name>
<reference key="1">
    <citation type="journal article" date="2011" name="J. Bacteriol.">
        <title>Complete genome sequence and updated annotation of Desulfovibrio alaskensis G20.</title>
        <authorList>
            <person name="Hauser L.J."/>
            <person name="Land M.L."/>
            <person name="Brown S.D."/>
            <person name="Larimer F."/>
            <person name="Keller K.L."/>
            <person name="Rapp-Giles B.J."/>
            <person name="Price M.N."/>
            <person name="Lin M."/>
            <person name="Bruce D.C."/>
            <person name="Detter J.C."/>
            <person name="Tapia R."/>
            <person name="Han C.S."/>
            <person name="Goodwin L.A."/>
            <person name="Cheng J.F."/>
            <person name="Pitluck S."/>
            <person name="Copeland A."/>
            <person name="Lucas S."/>
            <person name="Nolan M."/>
            <person name="Lapidus A.L."/>
            <person name="Palumbo A.V."/>
            <person name="Wall J.D."/>
        </authorList>
    </citation>
    <scope>NUCLEOTIDE SEQUENCE [LARGE SCALE GENOMIC DNA]</scope>
    <source>
        <strain>ATCC BAA-1058 / DSM 17464 / G20</strain>
    </source>
</reference>
<feature type="chain" id="PRO_0000235088" description="4-diphosphocytidyl-2-C-methyl-D-erythritol kinase">
    <location>
        <begin position="1"/>
        <end position="327"/>
    </location>
</feature>
<feature type="active site" evidence="1">
    <location>
        <position position="14"/>
    </location>
</feature>
<feature type="active site" evidence="1">
    <location>
        <position position="140"/>
    </location>
</feature>
<feature type="binding site" evidence="1">
    <location>
        <begin position="97"/>
        <end position="107"/>
    </location>
    <ligand>
        <name>ATP</name>
        <dbReference type="ChEBI" id="CHEBI:30616"/>
    </ligand>
</feature>
<comment type="function">
    <text evidence="1">Catalyzes the phosphorylation of the position 2 hydroxy group of 4-diphosphocytidyl-2C-methyl-D-erythritol.</text>
</comment>
<comment type="catalytic activity">
    <reaction evidence="1">
        <text>4-CDP-2-C-methyl-D-erythritol + ATP = 4-CDP-2-C-methyl-D-erythritol 2-phosphate + ADP + H(+)</text>
        <dbReference type="Rhea" id="RHEA:18437"/>
        <dbReference type="ChEBI" id="CHEBI:15378"/>
        <dbReference type="ChEBI" id="CHEBI:30616"/>
        <dbReference type="ChEBI" id="CHEBI:57823"/>
        <dbReference type="ChEBI" id="CHEBI:57919"/>
        <dbReference type="ChEBI" id="CHEBI:456216"/>
        <dbReference type="EC" id="2.7.1.148"/>
    </reaction>
</comment>
<comment type="pathway">
    <text evidence="1">Isoprenoid biosynthesis; isopentenyl diphosphate biosynthesis via DXP pathway; isopentenyl diphosphate from 1-deoxy-D-xylulose 5-phosphate: step 3/6.</text>
</comment>
<comment type="similarity">
    <text evidence="1">Belongs to the GHMP kinase family. IspE subfamily.</text>
</comment>
<protein>
    <recommendedName>
        <fullName evidence="1">4-diphosphocytidyl-2-C-methyl-D-erythritol kinase</fullName>
        <shortName evidence="1">CMK</shortName>
        <ecNumber evidence="1">2.7.1.148</ecNumber>
    </recommendedName>
    <alternativeName>
        <fullName evidence="1">4-(cytidine-5'-diphospho)-2-C-methyl-D-erythritol kinase</fullName>
    </alternativeName>
</protein>
<accession>Q30ZH4</accession>
<evidence type="ECO:0000255" key="1">
    <source>
        <dbReference type="HAMAP-Rule" id="MF_00061"/>
    </source>
</evidence>
<keyword id="KW-0067">ATP-binding</keyword>
<keyword id="KW-0414">Isoprene biosynthesis</keyword>
<keyword id="KW-0418">Kinase</keyword>
<keyword id="KW-0547">Nucleotide-binding</keyword>
<keyword id="KW-1185">Reference proteome</keyword>
<keyword id="KW-0808">Transferase</keyword>
<sequence length="327" mass="34850">MLTVPQQTIRSGCKINLFLEITGVRPDGYHELVTLFYPLSEPFDLMEISPATHGVTVLSERADLCGDKNIICKAWHTFAAAGGTPPPMQVRLAKGVPDGAGLGGGSANAAAVLKLLNTAGGAPRFSDTALAKIAAQVGADVPFFLHNTPCLATGIGEKLVPAPLDLSGWHLVLVCPGVQVSTPWAYNRWDTLYRSGLHHPCGQLPAAHAPAACAQLQTTGPDRPVRAETGCAGRKKNTCRSLTTERQADSKPVSRALWLFNSFETVVFSAYSELRQHKNTLLAHGASAALMSGSGSSLFGLFRDKAQAEAAMLHFCQRSIAVYVHRL</sequence>
<proteinExistence type="inferred from homology"/>